<accession>P61845</accession>
<accession>P27108</accession>
<accession>Q01938</accession>
<comment type="function">
    <text evidence="1">Binds to 23S rRNA.</text>
</comment>
<comment type="subunit">
    <text evidence="1">Part of the 50S ribosomal subunit.</text>
</comment>
<comment type="subcellular location">
    <subcellularLocation>
        <location>Plastid</location>
        <location>Chloroplast</location>
    </subcellularLocation>
</comment>
<comment type="similarity">
    <text evidence="3">Belongs to the universal ribosomal protein uL23 family.</text>
</comment>
<organism>
    <name type="scientific">Arabidopsis thaliana</name>
    <name type="common">Mouse-ear cress</name>
    <dbReference type="NCBI Taxonomy" id="3702"/>
    <lineage>
        <taxon>Eukaryota</taxon>
        <taxon>Viridiplantae</taxon>
        <taxon>Streptophyta</taxon>
        <taxon>Embryophyta</taxon>
        <taxon>Tracheophyta</taxon>
        <taxon>Spermatophyta</taxon>
        <taxon>Magnoliopsida</taxon>
        <taxon>eudicotyledons</taxon>
        <taxon>Gunneridae</taxon>
        <taxon>Pentapetalae</taxon>
        <taxon>rosids</taxon>
        <taxon>malvids</taxon>
        <taxon>Brassicales</taxon>
        <taxon>Brassicaceae</taxon>
        <taxon>Camelineae</taxon>
        <taxon>Arabidopsis</taxon>
    </lineage>
</organism>
<reference key="1">
    <citation type="journal article" date="1992" name="Nucleic Acids Res.">
        <title>Nucleotide sequence of trnI(CAU) and rpl23 from Arabidopsis thaliana chloroplast genome.</title>
        <authorList>
            <person name="Luschnig C."/>
            <person name="Schweizer D."/>
        </authorList>
    </citation>
    <scope>NUCLEOTIDE SEQUENCE [GENOMIC DNA]</scope>
    <source>
        <strain>cv. Columbia</strain>
    </source>
</reference>
<reference key="2">
    <citation type="journal article" date="1999" name="DNA Res.">
        <title>Complete structure of the chloroplast genome of Arabidopsis thaliana.</title>
        <authorList>
            <person name="Sato S."/>
            <person name="Nakamura Y."/>
            <person name="Kaneko T."/>
            <person name="Asamizu E."/>
            <person name="Tabata S."/>
        </authorList>
    </citation>
    <scope>NUCLEOTIDE SEQUENCE [LARGE SCALE GENOMIC DNA]</scope>
    <source>
        <strain>cv. Columbia</strain>
    </source>
</reference>
<reference key="3">
    <citation type="journal article" date="2023" name="Plant Cell">
        <title>An updated nomenclature for plant ribosomal protein genes.</title>
        <authorList>
            <person name="Scarpin M.R."/>
            <person name="Busche M."/>
            <person name="Martinez R.E."/>
            <person name="Harper L.C."/>
            <person name="Reiser L."/>
            <person name="Szakonyi D."/>
            <person name="Merchante C."/>
            <person name="Lan T."/>
            <person name="Xiong W."/>
            <person name="Mo B."/>
            <person name="Tang G."/>
            <person name="Chen X."/>
            <person name="Bailey-Serres J."/>
            <person name="Browning K.S."/>
            <person name="Brunkard J.O."/>
        </authorList>
    </citation>
    <scope>NOMENCLATURE</scope>
</reference>
<gene>
    <name type="primary">rpl23-A</name>
    <name type="synonym">rpl23-1</name>
    <name type="ordered locus">AtCg00840</name>
</gene>
<gene>
    <name type="primary">rpl23-B</name>
    <name type="synonym">rpl23-2</name>
    <name type="ordered locus">AtCg01300</name>
</gene>
<proteinExistence type="inferred from homology"/>
<evidence type="ECO:0000250" key="1"/>
<evidence type="ECO:0000303" key="2">
    <source>
    </source>
</evidence>
<evidence type="ECO:0000305" key="3"/>
<dbReference type="EMBL" id="X66414">
    <property type="protein sequence ID" value="CAA47045.1"/>
    <property type="molecule type" value="Genomic_DNA"/>
</dbReference>
<dbReference type="EMBL" id="AP000423">
    <property type="protein sequence ID" value="BAA84427.1"/>
    <property type="molecule type" value="Genomic_DNA"/>
</dbReference>
<dbReference type="EMBL" id="AP000423">
    <property type="protein sequence ID" value="BAA84450.1"/>
    <property type="molecule type" value="Genomic_DNA"/>
</dbReference>
<dbReference type="PIR" id="S26305">
    <property type="entry name" value="S26305"/>
</dbReference>
<dbReference type="SMR" id="P61845"/>
<dbReference type="BioGRID" id="29923">
    <property type="interactions" value="14"/>
</dbReference>
<dbReference type="FunCoup" id="P61845">
    <property type="interactions" value="91"/>
</dbReference>
<dbReference type="IntAct" id="P61845">
    <property type="interactions" value="1"/>
</dbReference>
<dbReference type="STRING" id="3702.P61845"/>
<dbReference type="iPTMnet" id="P61845"/>
<dbReference type="PaxDb" id="3702-ATCG00840.1"/>
<dbReference type="ProteomicsDB" id="234851"/>
<dbReference type="EnsemblPlants" id="ATCG00840.1">
    <property type="protein sequence ID" value="ATCG00840.1"/>
    <property type="gene ID" value="ATCG00840"/>
</dbReference>
<dbReference type="EnsemblPlants" id="ATCG01300.1">
    <property type="protein sequence ID" value="ATCG01300.1"/>
    <property type="gene ID" value="ATCG01300"/>
</dbReference>
<dbReference type="Gramene" id="ATCG00840.1">
    <property type="protein sequence ID" value="ATCG00840.1"/>
    <property type="gene ID" value="ATCG00840"/>
</dbReference>
<dbReference type="Gramene" id="ATCG01300.1">
    <property type="protein sequence ID" value="ATCG01300.1"/>
    <property type="gene ID" value="ATCG01300"/>
</dbReference>
<dbReference type="KEGG" id="ath:ArthCp065"/>
<dbReference type="KEGG" id="ath:ArthCp084"/>
<dbReference type="Araport" id="ATCG00840"/>
<dbReference type="Araport" id="ATCG01300"/>
<dbReference type="TAIR" id="ATCG00840">
    <property type="gene designation" value="RPL23.1"/>
</dbReference>
<dbReference type="TAIR" id="ATCG01300">
    <property type="gene designation" value="RPL23.2"/>
</dbReference>
<dbReference type="eggNOG" id="ENOG502SCW7">
    <property type="taxonomic scope" value="Eukaryota"/>
</dbReference>
<dbReference type="HOGENOM" id="CLU_037562_3_2_1"/>
<dbReference type="InParanoid" id="P61845"/>
<dbReference type="OMA" id="VRPIMGH"/>
<dbReference type="PRO" id="PR:P61845"/>
<dbReference type="Proteomes" id="UP000006548">
    <property type="component" value="Chloroplast Pltd"/>
</dbReference>
<dbReference type="ExpressionAtlas" id="P61845">
    <property type="expression patterns" value="baseline and differential"/>
</dbReference>
<dbReference type="GO" id="GO:0009507">
    <property type="term" value="C:chloroplast"/>
    <property type="evidence" value="ECO:0007005"/>
    <property type="project" value="TAIR"/>
</dbReference>
<dbReference type="GO" id="GO:0009941">
    <property type="term" value="C:chloroplast envelope"/>
    <property type="evidence" value="ECO:0007005"/>
    <property type="project" value="TAIR"/>
</dbReference>
<dbReference type="GO" id="GO:0009570">
    <property type="term" value="C:chloroplast stroma"/>
    <property type="evidence" value="ECO:0007005"/>
    <property type="project" value="TAIR"/>
</dbReference>
<dbReference type="GO" id="GO:0009536">
    <property type="term" value="C:plastid"/>
    <property type="evidence" value="ECO:0007005"/>
    <property type="project" value="TAIR"/>
</dbReference>
<dbReference type="GO" id="GO:1990904">
    <property type="term" value="C:ribonucleoprotein complex"/>
    <property type="evidence" value="ECO:0007669"/>
    <property type="project" value="UniProtKB-KW"/>
</dbReference>
<dbReference type="GO" id="GO:0005840">
    <property type="term" value="C:ribosome"/>
    <property type="evidence" value="ECO:0007669"/>
    <property type="project" value="UniProtKB-KW"/>
</dbReference>
<dbReference type="GO" id="GO:0003729">
    <property type="term" value="F:mRNA binding"/>
    <property type="evidence" value="ECO:0000314"/>
    <property type="project" value="TAIR"/>
</dbReference>
<dbReference type="GO" id="GO:0019843">
    <property type="term" value="F:rRNA binding"/>
    <property type="evidence" value="ECO:0007669"/>
    <property type="project" value="UniProtKB-UniRule"/>
</dbReference>
<dbReference type="GO" id="GO:0003735">
    <property type="term" value="F:structural constituent of ribosome"/>
    <property type="evidence" value="ECO:0000250"/>
    <property type="project" value="TAIR"/>
</dbReference>
<dbReference type="GO" id="GO:0006412">
    <property type="term" value="P:translation"/>
    <property type="evidence" value="ECO:0007669"/>
    <property type="project" value="UniProtKB-UniRule"/>
</dbReference>
<dbReference type="FunFam" id="3.30.70.330:FF:000002">
    <property type="entry name" value="50S ribosomal protein L23, chloroplastic"/>
    <property type="match status" value="1"/>
</dbReference>
<dbReference type="Gene3D" id="3.30.70.330">
    <property type="match status" value="1"/>
</dbReference>
<dbReference type="HAMAP" id="MF_01369_B">
    <property type="entry name" value="Ribosomal_uL23_B"/>
    <property type="match status" value="1"/>
</dbReference>
<dbReference type="InterPro" id="IPR012677">
    <property type="entry name" value="Nucleotide-bd_a/b_plait_sf"/>
</dbReference>
<dbReference type="InterPro" id="IPR013025">
    <property type="entry name" value="Ribosomal_uL23-like"/>
</dbReference>
<dbReference type="InterPro" id="IPR012678">
    <property type="entry name" value="Ribosomal_uL23/eL15/eS24_sf"/>
</dbReference>
<dbReference type="InterPro" id="IPR001014">
    <property type="entry name" value="Ribosomal_uL23_CS"/>
</dbReference>
<dbReference type="PANTHER" id="PTHR11620">
    <property type="entry name" value="60S RIBOSOMAL PROTEIN L23A"/>
    <property type="match status" value="1"/>
</dbReference>
<dbReference type="Pfam" id="PF00276">
    <property type="entry name" value="Ribosomal_L23"/>
    <property type="match status" value="1"/>
</dbReference>
<dbReference type="SUPFAM" id="SSF54189">
    <property type="entry name" value="Ribosomal proteins S24e, L23 and L15e"/>
    <property type="match status" value="1"/>
</dbReference>
<dbReference type="PROSITE" id="PS00050">
    <property type="entry name" value="RIBOSOMAL_L23"/>
    <property type="match status" value="1"/>
</dbReference>
<name>RK23_ARATH</name>
<geneLocation type="chloroplast"/>
<feature type="chain" id="PRO_0000129444" description="Large ribosomal subunit protein uL23cz/uL23cy">
    <location>
        <begin position="1"/>
        <end position="93"/>
    </location>
</feature>
<feature type="sequence conflict" description="In Ref. 1; CAA47045." evidence="3" ref="1">
    <original>K</original>
    <variation>M</variation>
    <location>
        <position position="46"/>
    </location>
</feature>
<protein>
    <recommendedName>
        <fullName evidence="2">Large ribosomal subunit protein uL23cz/uL23cy</fullName>
    </recommendedName>
    <alternativeName>
        <fullName>50S ribosomal protein L23, chloroplastic</fullName>
    </alternativeName>
</protein>
<keyword id="KW-0150">Chloroplast</keyword>
<keyword id="KW-0934">Plastid</keyword>
<keyword id="KW-1185">Reference proteome</keyword>
<keyword id="KW-0687">Ribonucleoprotein</keyword>
<keyword id="KW-0689">Ribosomal protein</keyword>
<keyword id="KW-0694">RNA-binding</keyword>
<keyword id="KW-0699">rRNA-binding</keyword>
<sequence length="93" mass="10789">MDGIKYAVFTDKSIRLLGKNQYTFNVESGSTRTEIKHWVELFFGVKVIAMNSHRLPGKVKRMGPILGHTMHYRRMIITLQPGYSIPPLRKKRT</sequence>